<keyword id="KW-0997">Cell inner membrane</keyword>
<keyword id="KW-1003">Cell membrane</keyword>
<keyword id="KW-0407">Ion channel</keyword>
<keyword id="KW-0406">Ion transport</keyword>
<keyword id="KW-0472">Membrane</keyword>
<keyword id="KW-0479">Metal-binding</keyword>
<keyword id="KW-0915">Sodium</keyword>
<keyword id="KW-0812">Transmembrane</keyword>
<keyword id="KW-1133">Transmembrane helix</keyword>
<keyword id="KW-0813">Transport</keyword>
<sequence>MIELDYLTIAFGGAIGAVLRYLVSRTINSLLPFSYIPLGTIIVNSVGSFFLSFLMFAAIEKVPLSKEAILFFGTGLLGAFTTFSTFTYETLSLIEESPARGVAYALVNLLFAFTCAYFGMILGRGKV</sequence>
<dbReference type="EMBL" id="CP000702">
    <property type="protein sequence ID" value="ABQ46921.1"/>
    <property type="molecule type" value="Genomic_DNA"/>
</dbReference>
<dbReference type="RefSeq" id="WP_011943480.1">
    <property type="nucleotide sequence ID" value="NC_009486.1"/>
</dbReference>
<dbReference type="SMR" id="A5IL48"/>
<dbReference type="STRING" id="390874.Tpet_0903"/>
<dbReference type="KEGG" id="tpt:Tpet_0903"/>
<dbReference type="eggNOG" id="COG0239">
    <property type="taxonomic scope" value="Bacteria"/>
</dbReference>
<dbReference type="HOGENOM" id="CLU_114342_2_3_0"/>
<dbReference type="Proteomes" id="UP000006558">
    <property type="component" value="Chromosome"/>
</dbReference>
<dbReference type="GO" id="GO:0005886">
    <property type="term" value="C:plasma membrane"/>
    <property type="evidence" value="ECO:0007669"/>
    <property type="project" value="UniProtKB-SubCell"/>
</dbReference>
<dbReference type="GO" id="GO:0062054">
    <property type="term" value="F:fluoride channel activity"/>
    <property type="evidence" value="ECO:0007669"/>
    <property type="project" value="UniProtKB-UniRule"/>
</dbReference>
<dbReference type="GO" id="GO:0046872">
    <property type="term" value="F:metal ion binding"/>
    <property type="evidence" value="ECO:0007669"/>
    <property type="project" value="UniProtKB-KW"/>
</dbReference>
<dbReference type="GO" id="GO:0140114">
    <property type="term" value="P:cellular detoxification of fluoride"/>
    <property type="evidence" value="ECO:0007669"/>
    <property type="project" value="UniProtKB-UniRule"/>
</dbReference>
<dbReference type="HAMAP" id="MF_00454">
    <property type="entry name" value="FluC"/>
    <property type="match status" value="1"/>
</dbReference>
<dbReference type="InterPro" id="IPR003691">
    <property type="entry name" value="FluC"/>
</dbReference>
<dbReference type="NCBIfam" id="TIGR00494">
    <property type="entry name" value="crcB"/>
    <property type="match status" value="1"/>
</dbReference>
<dbReference type="PANTHER" id="PTHR28259">
    <property type="entry name" value="FLUORIDE EXPORT PROTEIN 1-RELATED"/>
    <property type="match status" value="1"/>
</dbReference>
<dbReference type="PANTHER" id="PTHR28259:SF18">
    <property type="entry name" value="FLUORIDE-SPECIFIC ION CHANNEL FLUC"/>
    <property type="match status" value="1"/>
</dbReference>
<dbReference type="Pfam" id="PF02537">
    <property type="entry name" value="CRCB"/>
    <property type="match status" value="1"/>
</dbReference>
<reference key="1">
    <citation type="submission" date="2007-05" db="EMBL/GenBank/DDBJ databases">
        <title>Complete sequence of Thermotoga petrophila RKU-1.</title>
        <authorList>
            <consortium name="US DOE Joint Genome Institute"/>
            <person name="Copeland A."/>
            <person name="Lucas S."/>
            <person name="Lapidus A."/>
            <person name="Barry K."/>
            <person name="Glavina del Rio T."/>
            <person name="Dalin E."/>
            <person name="Tice H."/>
            <person name="Pitluck S."/>
            <person name="Sims D."/>
            <person name="Brettin T."/>
            <person name="Bruce D."/>
            <person name="Detter J.C."/>
            <person name="Han C."/>
            <person name="Tapia R."/>
            <person name="Schmutz J."/>
            <person name="Larimer F."/>
            <person name="Land M."/>
            <person name="Hauser L."/>
            <person name="Kyrpides N."/>
            <person name="Mikhailova N."/>
            <person name="Nelson K."/>
            <person name="Gogarten J.P."/>
            <person name="Noll K."/>
            <person name="Richardson P."/>
        </authorList>
    </citation>
    <scope>NUCLEOTIDE SEQUENCE [LARGE SCALE GENOMIC DNA]</scope>
    <source>
        <strain>ATCC BAA-488 / DSM 13995 / JCM 10881 / RKU-1</strain>
    </source>
</reference>
<comment type="function">
    <text evidence="1">Fluoride-specific ion channel. Important for reducing fluoride concentration in the cell, thus reducing its toxicity.</text>
</comment>
<comment type="catalytic activity">
    <reaction evidence="1">
        <text>fluoride(in) = fluoride(out)</text>
        <dbReference type="Rhea" id="RHEA:76159"/>
        <dbReference type="ChEBI" id="CHEBI:17051"/>
    </reaction>
    <physiologicalReaction direction="left-to-right" evidence="1">
        <dbReference type="Rhea" id="RHEA:76160"/>
    </physiologicalReaction>
</comment>
<comment type="activity regulation">
    <text evidence="1">Na(+) is not transported, but it plays an essential structural role and its presence is essential for fluoride channel function.</text>
</comment>
<comment type="subcellular location">
    <subcellularLocation>
        <location evidence="1">Cell inner membrane</location>
        <topology evidence="1">Multi-pass membrane protein</topology>
    </subcellularLocation>
</comment>
<comment type="similarity">
    <text evidence="1">Belongs to the fluoride channel Fluc/FEX (TC 1.A.43) family.</text>
</comment>
<gene>
    <name evidence="1" type="primary">fluC</name>
    <name evidence="1" type="synonym">crcB</name>
    <name type="ordered locus">Tpet_0903</name>
</gene>
<protein>
    <recommendedName>
        <fullName evidence="1">Fluoride-specific ion channel FluC</fullName>
    </recommendedName>
</protein>
<accession>A5IL48</accession>
<organism>
    <name type="scientific">Thermotoga petrophila (strain ATCC BAA-488 / DSM 13995 / JCM 10881 / RKU-1)</name>
    <dbReference type="NCBI Taxonomy" id="390874"/>
    <lineage>
        <taxon>Bacteria</taxon>
        <taxon>Thermotogati</taxon>
        <taxon>Thermotogota</taxon>
        <taxon>Thermotogae</taxon>
        <taxon>Thermotogales</taxon>
        <taxon>Thermotogaceae</taxon>
        <taxon>Thermotoga</taxon>
    </lineage>
</organism>
<evidence type="ECO:0000255" key="1">
    <source>
        <dbReference type="HAMAP-Rule" id="MF_00454"/>
    </source>
</evidence>
<name>FLUC_THEP1</name>
<feature type="chain" id="PRO_1000026425" description="Fluoride-specific ion channel FluC">
    <location>
        <begin position="1"/>
        <end position="127"/>
    </location>
</feature>
<feature type="transmembrane region" description="Helical" evidence="1">
    <location>
        <begin position="4"/>
        <end position="24"/>
    </location>
</feature>
<feature type="transmembrane region" description="Helical" evidence="1">
    <location>
        <begin position="39"/>
        <end position="59"/>
    </location>
</feature>
<feature type="transmembrane region" description="Helical" evidence="1">
    <location>
        <begin position="68"/>
        <end position="88"/>
    </location>
</feature>
<feature type="transmembrane region" description="Helical" evidence="1">
    <location>
        <begin position="102"/>
        <end position="122"/>
    </location>
</feature>
<feature type="binding site" evidence="1">
    <location>
        <position position="78"/>
    </location>
    <ligand>
        <name>Na(+)</name>
        <dbReference type="ChEBI" id="CHEBI:29101"/>
        <note>structural</note>
    </ligand>
</feature>
<feature type="binding site" evidence="1">
    <location>
        <position position="81"/>
    </location>
    <ligand>
        <name>Na(+)</name>
        <dbReference type="ChEBI" id="CHEBI:29101"/>
        <note>structural</note>
    </ligand>
</feature>
<proteinExistence type="inferred from homology"/>